<proteinExistence type="inferred from homology"/>
<gene>
    <name evidence="1" type="primary">Aprt</name>
</gene>
<keyword id="KW-0007">Acetylation</keyword>
<keyword id="KW-0963">Cytoplasm</keyword>
<keyword id="KW-0328">Glycosyltransferase</keyword>
<keyword id="KW-0597">Phosphoprotein</keyword>
<keyword id="KW-0660">Purine salvage</keyword>
<keyword id="KW-1185">Reference proteome</keyword>
<keyword id="KW-0808">Transferase</keyword>
<evidence type="ECO:0000250" key="1">
    <source>
        <dbReference type="UniProtKB" id="P07741"/>
    </source>
</evidence>
<evidence type="ECO:0000250" key="2">
    <source>
        <dbReference type="UniProtKB" id="P36972"/>
    </source>
</evidence>
<evidence type="ECO:0000305" key="3"/>
<organism>
    <name type="scientific">Mus spicilegus</name>
    <name type="common">Steppe mouse</name>
    <dbReference type="NCBI Taxonomy" id="10103"/>
    <lineage>
        <taxon>Eukaryota</taxon>
        <taxon>Metazoa</taxon>
        <taxon>Chordata</taxon>
        <taxon>Craniata</taxon>
        <taxon>Vertebrata</taxon>
        <taxon>Euteleostomi</taxon>
        <taxon>Mammalia</taxon>
        <taxon>Eutheria</taxon>
        <taxon>Euarchontoglires</taxon>
        <taxon>Glires</taxon>
        <taxon>Rodentia</taxon>
        <taxon>Myomorpha</taxon>
        <taxon>Muroidea</taxon>
        <taxon>Muridae</taxon>
        <taxon>Murinae</taxon>
        <taxon>Mus</taxon>
        <taxon>Mus</taxon>
    </lineage>
</organism>
<feature type="initiator methionine" description="Removed" evidence="2">
    <location>
        <position position="1"/>
    </location>
</feature>
<feature type="chain" id="PRO_0000149508" description="Adenine phosphoribosyltransferase">
    <location>
        <begin position="2"/>
        <end position="180"/>
    </location>
</feature>
<feature type="modified residue" description="N-acetylserine" evidence="2">
    <location>
        <position position="2"/>
    </location>
</feature>
<feature type="modified residue" description="Phosphoserine" evidence="1">
    <location>
        <position position="15"/>
    </location>
</feature>
<feature type="modified residue" description="Phosphoserine" evidence="1">
    <location>
        <position position="30"/>
    </location>
</feature>
<feature type="modified residue" description="Phosphotyrosine" evidence="1">
    <location>
        <position position="60"/>
    </location>
</feature>
<feature type="modified residue" description="Phosphoserine" evidence="1">
    <location>
        <position position="66"/>
    </location>
</feature>
<feature type="modified residue" description="N6-acetyllysine" evidence="1">
    <location>
        <position position="114"/>
    </location>
</feature>
<feature type="modified residue" description="Phosphothreonine" evidence="1">
    <location>
        <position position="135"/>
    </location>
</feature>
<sequence length="180" mass="19724">MSEPELKLVARRIRSFPDFPIPGVLFRDISPLLKDPDSFRASIRLLASHLKSTHSGKIDYIAGLDSRGFLFGPSLAQELGVGCVLIRKQGKLPGPTVSASYSLEYGKAELEIQKDALEPGQRVVIVDDLLATGGTMFAACDLLHQLRAEVVECVSLVELTSLKGRERLGPIPFFSLLQYD</sequence>
<accession>P47957</accession>
<protein>
    <recommendedName>
        <fullName evidence="1">Adenine phosphoribosyltransferase</fullName>
        <shortName>APRT</shortName>
        <ecNumber evidence="1">2.4.2.7</ecNumber>
    </recommendedName>
</protein>
<reference key="1">
    <citation type="journal article" date="1997" name="Heredity">
        <title>Substitution rate variation in closely related rodent species.</title>
        <authorList>
            <person name="Fieldhouse D."/>
            <person name="Yazdani F."/>
            <person name="Golding G.B."/>
        </authorList>
    </citation>
    <scope>NUCLEOTIDE SEQUENCE [GENOMIC DNA]</scope>
</reference>
<dbReference type="EC" id="2.4.2.7" evidence="1"/>
<dbReference type="EMBL" id="U28720">
    <property type="protein sequence ID" value="AAA68958.1"/>
    <property type="molecule type" value="Genomic_DNA"/>
</dbReference>
<dbReference type="SMR" id="P47957"/>
<dbReference type="Ensembl" id="ENSMSIT00000022649.1">
    <property type="protein sequence ID" value="ENSMSIP00000017914.1"/>
    <property type="gene ID" value="ENSMSIG00000015264.1"/>
</dbReference>
<dbReference type="GeneTree" id="ENSGT00390000017259"/>
<dbReference type="UniPathway" id="UPA00588">
    <property type="reaction ID" value="UER00646"/>
</dbReference>
<dbReference type="Proteomes" id="UP000694415">
    <property type="component" value="Unplaced"/>
</dbReference>
<dbReference type="GO" id="GO:0005829">
    <property type="term" value="C:cytosol"/>
    <property type="evidence" value="ECO:0007669"/>
    <property type="project" value="Ensembl"/>
</dbReference>
<dbReference type="GO" id="GO:0002055">
    <property type="term" value="F:adenine binding"/>
    <property type="evidence" value="ECO:0007669"/>
    <property type="project" value="Ensembl"/>
</dbReference>
<dbReference type="GO" id="GO:0003999">
    <property type="term" value="F:adenine phosphoribosyltransferase activity"/>
    <property type="evidence" value="ECO:0000250"/>
    <property type="project" value="UniProtKB"/>
</dbReference>
<dbReference type="GO" id="GO:0016208">
    <property type="term" value="F:AMP binding"/>
    <property type="evidence" value="ECO:0007669"/>
    <property type="project" value="TreeGrafter"/>
</dbReference>
<dbReference type="GO" id="GO:0006168">
    <property type="term" value="P:adenine salvage"/>
    <property type="evidence" value="ECO:0007669"/>
    <property type="project" value="InterPro"/>
</dbReference>
<dbReference type="GO" id="GO:0044209">
    <property type="term" value="P:AMP salvage"/>
    <property type="evidence" value="ECO:0007669"/>
    <property type="project" value="UniProtKB-UniPathway"/>
</dbReference>
<dbReference type="GO" id="GO:0032263">
    <property type="term" value="P:GMP salvage"/>
    <property type="evidence" value="ECO:0007669"/>
    <property type="project" value="Ensembl"/>
</dbReference>
<dbReference type="GO" id="GO:0007625">
    <property type="term" value="P:grooming behavior"/>
    <property type="evidence" value="ECO:0007669"/>
    <property type="project" value="Ensembl"/>
</dbReference>
<dbReference type="GO" id="GO:0032264">
    <property type="term" value="P:IMP salvage"/>
    <property type="evidence" value="ECO:0007669"/>
    <property type="project" value="Ensembl"/>
</dbReference>
<dbReference type="GO" id="GO:0006166">
    <property type="term" value="P:purine ribonucleoside salvage"/>
    <property type="evidence" value="ECO:0007669"/>
    <property type="project" value="UniProtKB-KW"/>
</dbReference>
<dbReference type="CDD" id="cd06223">
    <property type="entry name" value="PRTases_typeI"/>
    <property type="match status" value="1"/>
</dbReference>
<dbReference type="FunFam" id="3.40.50.2020:FF:000123">
    <property type="entry name" value="Adenine phosphoribosyltransferase"/>
    <property type="match status" value="1"/>
</dbReference>
<dbReference type="Gene3D" id="3.40.50.2020">
    <property type="match status" value="1"/>
</dbReference>
<dbReference type="HAMAP" id="MF_00004">
    <property type="entry name" value="Aden_phosphoribosyltr"/>
    <property type="match status" value="1"/>
</dbReference>
<dbReference type="InterPro" id="IPR005764">
    <property type="entry name" value="Ade_phspho_trans"/>
</dbReference>
<dbReference type="InterPro" id="IPR000836">
    <property type="entry name" value="PRibTrfase_dom"/>
</dbReference>
<dbReference type="InterPro" id="IPR029057">
    <property type="entry name" value="PRTase-like"/>
</dbReference>
<dbReference type="InterPro" id="IPR050054">
    <property type="entry name" value="UPRTase/APRTase"/>
</dbReference>
<dbReference type="NCBIfam" id="TIGR01090">
    <property type="entry name" value="apt"/>
    <property type="match status" value="1"/>
</dbReference>
<dbReference type="NCBIfam" id="NF002634">
    <property type="entry name" value="PRK02304.1-3"/>
    <property type="match status" value="1"/>
</dbReference>
<dbReference type="NCBIfam" id="NF002636">
    <property type="entry name" value="PRK02304.1-5"/>
    <property type="match status" value="1"/>
</dbReference>
<dbReference type="PANTHER" id="PTHR32315">
    <property type="entry name" value="ADENINE PHOSPHORIBOSYLTRANSFERASE"/>
    <property type="match status" value="1"/>
</dbReference>
<dbReference type="PANTHER" id="PTHR32315:SF3">
    <property type="entry name" value="ADENINE PHOSPHORIBOSYLTRANSFERASE"/>
    <property type="match status" value="1"/>
</dbReference>
<dbReference type="Pfam" id="PF00156">
    <property type="entry name" value="Pribosyltran"/>
    <property type="match status" value="1"/>
</dbReference>
<dbReference type="SUPFAM" id="SSF53271">
    <property type="entry name" value="PRTase-like"/>
    <property type="match status" value="1"/>
</dbReference>
<dbReference type="PROSITE" id="PS00103">
    <property type="entry name" value="PUR_PYR_PR_TRANSFER"/>
    <property type="match status" value="1"/>
</dbReference>
<name>APT_MUSSI</name>
<comment type="function">
    <text evidence="1">Catalyzes a salvage reaction resulting in the formation of AMP, that is energically less costly than de novo synthesis.</text>
</comment>
<comment type="catalytic activity">
    <reaction evidence="1">
        <text>AMP + diphosphate = 5-phospho-alpha-D-ribose 1-diphosphate + adenine</text>
        <dbReference type="Rhea" id="RHEA:16609"/>
        <dbReference type="ChEBI" id="CHEBI:16708"/>
        <dbReference type="ChEBI" id="CHEBI:33019"/>
        <dbReference type="ChEBI" id="CHEBI:58017"/>
        <dbReference type="ChEBI" id="CHEBI:456215"/>
        <dbReference type="EC" id="2.4.2.7"/>
    </reaction>
</comment>
<comment type="pathway">
    <text evidence="1">Purine metabolism; AMP biosynthesis via salvage pathway; AMP from adenine: step 1/1.</text>
</comment>
<comment type="subunit">
    <text>Homodimer.</text>
</comment>
<comment type="subcellular location">
    <subcellularLocation>
        <location>Cytoplasm</location>
    </subcellularLocation>
</comment>
<comment type="similarity">
    <text evidence="3">Belongs to the purine/pyrimidine phosphoribosyltransferase family.</text>
</comment>